<evidence type="ECO:0000255" key="1">
    <source>
        <dbReference type="HAMAP-Rule" id="MF_00438"/>
    </source>
</evidence>
<evidence type="ECO:0000305" key="2"/>
<feature type="chain" id="PRO_0000217583" description="Photosystem II reaction center protein M">
    <location>
        <begin position="1"/>
        <end position="34"/>
    </location>
</feature>
<feature type="transmembrane region" description="Helical" evidence="1">
    <location>
        <begin position="7"/>
        <end position="27"/>
    </location>
</feature>
<comment type="function">
    <text evidence="1">One of the components of the core complex of photosystem II (PSII). PSII is a light-driven water:plastoquinone oxidoreductase that uses light energy to abstract electrons from H(2)O, generating O(2) and a proton gradient subsequently used for ATP formation. It consists of a core antenna complex that captures photons, and an electron transfer chain that converts photonic excitation into a charge separation. This subunit is found at the monomer-monomer interface.</text>
</comment>
<comment type="subunit">
    <text evidence="2">PSII is composed of 1 copy each of membrane proteins PsbA, PsbB, PsbC, PsbD, PsbE, PsbF, PsbH, PsbI, PsbJ, PsbK, PsbL, PsbM, PsbT, PsbX, PsbY, Psb30/Ycf12, peripheral proteins PsbO, CyanoQ (PsbQ), PsbU, PsbV and a large number of cofactors. It forms dimeric complexes.</text>
</comment>
<comment type="subcellular location">
    <subcellularLocation>
        <location evidence="1">Cellular thylakoid membrane</location>
        <topology evidence="1">Single-pass membrane protein</topology>
    </subcellularLocation>
</comment>
<comment type="similarity">
    <text evidence="1">Belongs to the PsbM family.</text>
</comment>
<sequence length="34" mass="3775">MPVNNFGFLATLLFVAVPMLFLIGLYIQTNSNKS</sequence>
<organism>
    <name type="scientific">Prochlorococcus marinus (strain MIT 9313)</name>
    <dbReference type="NCBI Taxonomy" id="74547"/>
    <lineage>
        <taxon>Bacteria</taxon>
        <taxon>Bacillati</taxon>
        <taxon>Cyanobacteriota</taxon>
        <taxon>Cyanophyceae</taxon>
        <taxon>Synechococcales</taxon>
        <taxon>Prochlorococcaceae</taxon>
        <taxon>Prochlorococcus</taxon>
    </lineage>
</organism>
<name>PSBM_PROMM</name>
<protein>
    <recommendedName>
        <fullName evidence="1">Photosystem II reaction center protein M</fullName>
        <shortName evidence="1">PSII-M</shortName>
    </recommendedName>
</protein>
<proteinExistence type="inferred from homology"/>
<dbReference type="EMBL" id="BX548175">
    <property type="protein sequence ID" value="CAE21838.1"/>
    <property type="molecule type" value="Genomic_DNA"/>
</dbReference>
<dbReference type="RefSeq" id="WP_011131030.1">
    <property type="nucleotide sequence ID" value="NC_005071.1"/>
</dbReference>
<dbReference type="SMR" id="Q7TUP7"/>
<dbReference type="KEGG" id="pmt:PMT_1663"/>
<dbReference type="HOGENOM" id="CLU_215415_0_0_3"/>
<dbReference type="OrthoDB" id="532820at2"/>
<dbReference type="Proteomes" id="UP000001423">
    <property type="component" value="Chromosome"/>
</dbReference>
<dbReference type="GO" id="GO:0009523">
    <property type="term" value="C:photosystem II"/>
    <property type="evidence" value="ECO:0007669"/>
    <property type="project" value="UniProtKB-KW"/>
</dbReference>
<dbReference type="GO" id="GO:0031676">
    <property type="term" value="C:plasma membrane-derived thylakoid membrane"/>
    <property type="evidence" value="ECO:0007669"/>
    <property type="project" value="UniProtKB-SubCell"/>
</dbReference>
<dbReference type="GO" id="GO:0019684">
    <property type="term" value="P:photosynthesis, light reaction"/>
    <property type="evidence" value="ECO:0007669"/>
    <property type="project" value="InterPro"/>
</dbReference>
<dbReference type="HAMAP" id="MF_00438">
    <property type="entry name" value="PSII_PsbM"/>
    <property type="match status" value="1"/>
</dbReference>
<dbReference type="InterPro" id="IPR007826">
    <property type="entry name" value="PSII_PsbM"/>
</dbReference>
<dbReference type="InterPro" id="IPR037269">
    <property type="entry name" value="PSII_PsbM_sf"/>
</dbReference>
<dbReference type="NCBIfam" id="TIGR03038">
    <property type="entry name" value="PS_II_psbM"/>
    <property type="match status" value="1"/>
</dbReference>
<dbReference type="Pfam" id="PF05151">
    <property type="entry name" value="PsbM"/>
    <property type="match status" value="1"/>
</dbReference>
<dbReference type="SUPFAM" id="SSF161033">
    <property type="entry name" value="Photosystem II reaction center protein M, PsbM"/>
    <property type="match status" value="1"/>
</dbReference>
<reference key="1">
    <citation type="journal article" date="2003" name="Nature">
        <title>Genome divergence in two Prochlorococcus ecotypes reflects oceanic niche differentiation.</title>
        <authorList>
            <person name="Rocap G."/>
            <person name="Larimer F.W."/>
            <person name="Lamerdin J.E."/>
            <person name="Malfatti S."/>
            <person name="Chain P."/>
            <person name="Ahlgren N.A."/>
            <person name="Arellano A."/>
            <person name="Coleman M."/>
            <person name="Hauser L."/>
            <person name="Hess W.R."/>
            <person name="Johnson Z.I."/>
            <person name="Land M.L."/>
            <person name="Lindell D."/>
            <person name="Post A.F."/>
            <person name="Regala W."/>
            <person name="Shah M."/>
            <person name="Shaw S.L."/>
            <person name="Steglich C."/>
            <person name="Sullivan M.B."/>
            <person name="Ting C.S."/>
            <person name="Tolonen A."/>
            <person name="Webb E.A."/>
            <person name="Zinser E.R."/>
            <person name="Chisholm S.W."/>
        </authorList>
    </citation>
    <scope>NUCLEOTIDE SEQUENCE [LARGE SCALE GENOMIC DNA]</scope>
    <source>
        <strain>MIT 9313</strain>
    </source>
</reference>
<gene>
    <name evidence="1" type="primary">psbM</name>
    <name type="ordered locus">PMT_1663</name>
</gene>
<accession>Q7TUP7</accession>
<keyword id="KW-0472">Membrane</keyword>
<keyword id="KW-0602">Photosynthesis</keyword>
<keyword id="KW-0604">Photosystem II</keyword>
<keyword id="KW-0674">Reaction center</keyword>
<keyword id="KW-1185">Reference proteome</keyword>
<keyword id="KW-0793">Thylakoid</keyword>
<keyword id="KW-0812">Transmembrane</keyword>
<keyword id="KW-1133">Transmembrane helix</keyword>